<name>GCSPA_SACI1</name>
<feature type="chain" id="PRO_1000212668" description="Probable glycine dehydrogenase (decarboxylating) subunit 1">
    <location>
        <begin position="1"/>
        <end position="455"/>
    </location>
</feature>
<keyword id="KW-0560">Oxidoreductase</keyword>
<gene>
    <name evidence="1" type="primary">gcvPA</name>
    <name type="ordered locus">YN1551_1560</name>
</gene>
<comment type="function">
    <text evidence="1">The glycine cleavage system catalyzes the degradation of glycine. The P protein binds the alpha-amino group of glycine through its pyridoxal phosphate cofactor; CO(2) is released and the remaining methylamine moiety is then transferred to the lipoamide cofactor of the H protein.</text>
</comment>
<comment type="catalytic activity">
    <reaction evidence="1">
        <text>N(6)-[(R)-lipoyl]-L-lysyl-[glycine-cleavage complex H protein] + glycine + H(+) = N(6)-[(R)-S(8)-aminomethyldihydrolipoyl]-L-lysyl-[glycine-cleavage complex H protein] + CO2</text>
        <dbReference type="Rhea" id="RHEA:24304"/>
        <dbReference type="Rhea" id="RHEA-COMP:10494"/>
        <dbReference type="Rhea" id="RHEA-COMP:10495"/>
        <dbReference type="ChEBI" id="CHEBI:15378"/>
        <dbReference type="ChEBI" id="CHEBI:16526"/>
        <dbReference type="ChEBI" id="CHEBI:57305"/>
        <dbReference type="ChEBI" id="CHEBI:83099"/>
        <dbReference type="ChEBI" id="CHEBI:83143"/>
        <dbReference type="EC" id="1.4.4.2"/>
    </reaction>
</comment>
<comment type="subunit">
    <text evidence="1">The glycine cleavage system is composed of four proteins: P, T, L and H. In this organism, the P 'protein' is a heterodimer of two subunits.</text>
</comment>
<comment type="similarity">
    <text evidence="1">Belongs to the GcvP family. N-terminal subunit subfamily.</text>
</comment>
<accession>C3NHN8</accession>
<sequence>MYKHPWLPNLDLIDEMLKEIGVNSLDELFNDIPAEIKINRLLNVAKGKPLSEYEIEKEINEKVKKNVELQAPPFIGAGICPHYIPNVVKFIIGRSEFYTSYTPYQPEISQGLLQALFEYQSLMAELLDMDVVNASMYDWGSALAEAVLMANRINGKKTVLVPENANPFHKEVVRTWIGGKGIKIEEVKYDKNSGELDLEDLEKKSNIDDISAIYIQQPNFFGIFESNIEHVIDVAKHKRALSIVGVNPLSLGLIKPPGSYEADIVVGDGQELGLPLNFGGPLMGVFAVRWDMSLVRQMPGRIVGITKDTNGKMGFTLILQTREQFIKREKATSNITTNEALLAIANAVYLSLLGKEGMRELAEEIYFRSHYAAKKLTEIDNVSMPFRSDFFEEFAIRFPIEYDKISNKLKERKLQGGLKLSDYTSLFCVTEVHDKKSIDLLVSTIQEMINGVETS</sequence>
<protein>
    <recommendedName>
        <fullName evidence="1">Probable glycine dehydrogenase (decarboxylating) subunit 1</fullName>
        <ecNumber evidence="1">1.4.4.2</ecNumber>
    </recommendedName>
    <alternativeName>
        <fullName evidence="1">Glycine cleavage system P-protein subunit 1</fullName>
    </alternativeName>
    <alternativeName>
        <fullName evidence="1">Glycine decarboxylase subunit 1</fullName>
    </alternativeName>
    <alternativeName>
        <fullName evidence="1">Glycine dehydrogenase (aminomethyl-transferring) subunit 1</fullName>
    </alternativeName>
</protein>
<reference key="1">
    <citation type="journal article" date="2009" name="Proc. Natl. Acad. Sci. U.S.A.">
        <title>Biogeography of the Sulfolobus islandicus pan-genome.</title>
        <authorList>
            <person name="Reno M.L."/>
            <person name="Held N.L."/>
            <person name="Fields C.J."/>
            <person name="Burke P.V."/>
            <person name="Whitaker R.J."/>
        </authorList>
    </citation>
    <scope>NUCLEOTIDE SEQUENCE [LARGE SCALE GENOMIC DNA]</scope>
    <source>
        <strain>Y.N.15.51 / Yellowstone #2</strain>
    </source>
</reference>
<evidence type="ECO:0000255" key="1">
    <source>
        <dbReference type="HAMAP-Rule" id="MF_00712"/>
    </source>
</evidence>
<dbReference type="EC" id="1.4.4.2" evidence="1"/>
<dbReference type="EMBL" id="CP001404">
    <property type="protein sequence ID" value="ACP48648.1"/>
    <property type="molecule type" value="Genomic_DNA"/>
</dbReference>
<dbReference type="RefSeq" id="WP_012711309.1">
    <property type="nucleotide sequence ID" value="NC_012623.1"/>
</dbReference>
<dbReference type="SMR" id="C3NHN8"/>
<dbReference type="GeneID" id="84061616"/>
<dbReference type="KEGG" id="sin:YN1551_1560"/>
<dbReference type="HOGENOM" id="CLU_004620_0_2_2"/>
<dbReference type="Proteomes" id="UP000006818">
    <property type="component" value="Chromosome"/>
</dbReference>
<dbReference type="GO" id="GO:0004375">
    <property type="term" value="F:glycine dehydrogenase (decarboxylating) activity"/>
    <property type="evidence" value="ECO:0007669"/>
    <property type="project" value="UniProtKB-EC"/>
</dbReference>
<dbReference type="GO" id="GO:0019464">
    <property type="term" value="P:glycine decarboxylation via glycine cleavage system"/>
    <property type="evidence" value="ECO:0007669"/>
    <property type="project" value="UniProtKB-UniRule"/>
</dbReference>
<dbReference type="GO" id="GO:0009116">
    <property type="term" value="P:nucleoside metabolic process"/>
    <property type="evidence" value="ECO:0007669"/>
    <property type="project" value="InterPro"/>
</dbReference>
<dbReference type="CDD" id="cd00613">
    <property type="entry name" value="GDC-P"/>
    <property type="match status" value="1"/>
</dbReference>
<dbReference type="Gene3D" id="3.90.1150.10">
    <property type="entry name" value="Aspartate Aminotransferase, domain 1"/>
    <property type="match status" value="1"/>
</dbReference>
<dbReference type="Gene3D" id="3.40.640.10">
    <property type="entry name" value="Type I PLP-dependent aspartate aminotransferase-like (Major domain)"/>
    <property type="match status" value="1"/>
</dbReference>
<dbReference type="HAMAP" id="MF_00712">
    <property type="entry name" value="GcvPA"/>
    <property type="match status" value="1"/>
</dbReference>
<dbReference type="InterPro" id="IPR023010">
    <property type="entry name" value="GcvPA"/>
</dbReference>
<dbReference type="InterPro" id="IPR049315">
    <property type="entry name" value="GDC-P_N"/>
</dbReference>
<dbReference type="InterPro" id="IPR020581">
    <property type="entry name" value="GDC_P"/>
</dbReference>
<dbReference type="InterPro" id="IPR015424">
    <property type="entry name" value="PyrdxlP-dep_Trfase"/>
</dbReference>
<dbReference type="InterPro" id="IPR015421">
    <property type="entry name" value="PyrdxlP-dep_Trfase_major"/>
</dbReference>
<dbReference type="InterPro" id="IPR015422">
    <property type="entry name" value="PyrdxlP-dep_Trfase_small"/>
</dbReference>
<dbReference type="NCBIfam" id="NF001696">
    <property type="entry name" value="PRK00451.1"/>
    <property type="match status" value="1"/>
</dbReference>
<dbReference type="PANTHER" id="PTHR42806">
    <property type="entry name" value="GLYCINE CLEAVAGE SYSTEM P-PROTEIN"/>
    <property type="match status" value="1"/>
</dbReference>
<dbReference type="PANTHER" id="PTHR42806:SF1">
    <property type="entry name" value="GLYCINE DEHYDROGENASE (DECARBOXYLATING)"/>
    <property type="match status" value="1"/>
</dbReference>
<dbReference type="Pfam" id="PF02347">
    <property type="entry name" value="GDC-P"/>
    <property type="match status" value="1"/>
</dbReference>
<dbReference type="PIRSF" id="PIRSF006815">
    <property type="entry name" value="GcvPA"/>
    <property type="match status" value="1"/>
</dbReference>
<dbReference type="SUPFAM" id="SSF53383">
    <property type="entry name" value="PLP-dependent transferases"/>
    <property type="match status" value="1"/>
</dbReference>
<proteinExistence type="inferred from homology"/>
<organism>
    <name type="scientific">Saccharolobus islandicus (strain Y.N.15.51 / Yellowstone #2)</name>
    <name type="common">Sulfolobus islandicus</name>
    <dbReference type="NCBI Taxonomy" id="419942"/>
    <lineage>
        <taxon>Archaea</taxon>
        <taxon>Thermoproteota</taxon>
        <taxon>Thermoprotei</taxon>
        <taxon>Sulfolobales</taxon>
        <taxon>Sulfolobaceae</taxon>
        <taxon>Saccharolobus</taxon>
    </lineage>
</organism>